<sequence length="671" mass="75381">MNLHQPLHVLPGVGPKSAEKYAKLGIENLQDLLLYFPFRYEDFKTKQVLELEDGEKAVLSGQVVTPASVQYYGFKRNRLRFSLKQGEVVFAVNFFNQPYLADKIELGATLAVFGKWDRAKASLTGMKVLAQVEDDLQPVYRLAQGISQASLVKVIKTAFDQGLDLLIEENLPQSLLDKYKLMSRCQAVRAMHFPKYLAEYKQALRRIKFEELFYFQMQLQMLKSENRVQGSGLVLNWSQEKVTAVKVSLPFALTQAQEKSLQEILTDMKSDHHMNRLLQGDVGSGKTVVAGLAMFAAVTAGYQAALMVPTEILAEQHFESLQNLFPNLKLALLTGSLKAAEKREVLETIAKGEADLIIGTHALIQDGVEYARLGLIIIDEQHRFGVGQRRILREKGDNPDVLMMTATPIPRTLAITAFGDMDVSIIDQMPAGRKPIVTRWIKHEQLPQVLTWLEGEIQKGSQVYVISPLIEESEALDLKNAIALSEELTTHFAGKAEVALLHGRMKSDEKDQIMQDFKERKTDILVSTTVIEVGVNVPNATVMIIMDADRFGLSQLHQLRGRVGRGDKQSYAVLVANPKTDSGKDRMRIMTETTNGFVLAEEDLKMRGSGEIFGTRQSGLPEFQVADIIEDFPILEEARKVASYISSIEAWQEDPEWRMIALHLEKKEHLD</sequence>
<keyword id="KW-0067">ATP-binding</keyword>
<keyword id="KW-0227">DNA damage</keyword>
<keyword id="KW-0233">DNA recombination</keyword>
<keyword id="KW-0234">DNA repair</keyword>
<keyword id="KW-0238">DNA-binding</keyword>
<keyword id="KW-0347">Helicase</keyword>
<keyword id="KW-0378">Hydrolase</keyword>
<keyword id="KW-0413">Isomerase</keyword>
<keyword id="KW-0547">Nucleotide-binding</keyword>
<keyword id="KW-1185">Reference proteome</keyword>
<accession>Q54900</accession>
<gene>
    <name type="primary">recG</name>
    <name evidence="9" type="synonym">mmsA</name>
    <name type="ordered locus">SP_1697</name>
</gene>
<dbReference type="EC" id="5.6.2.4" evidence="2"/>
<dbReference type="EMBL" id="Z49988">
    <property type="protein sequence ID" value="CAA90280.1"/>
    <property type="molecule type" value="Genomic_DNA"/>
</dbReference>
<dbReference type="EMBL" id="AE005672">
    <property type="protein sequence ID" value="AAK75775.1"/>
    <property type="molecule type" value="Genomic_DNA"/>
</dbReference>
<dbReference type="PIR" id="B98064">
    <property type="entry name" value="B98064"/>
</dbReference>
<dbReference type="PIR" id="F95197">
    <property type="entry name" value="F95197"/>
</dbReference>
<dbReference type="PIR" id="S71016">
    <property type="entry name" value="S71016"/>
</dbReference>
<dbReference type="RefSeq" id="WP_001048775.1">
    <property type="nucleotide sequence ID" value="NZ_CP155539.1"/>
</dbReference>
<dbReference type="SMR" id="Q54900"/>
<dbReference type="PaxDb" id="170187-SP_1697"/>
<dbReference type="EnsemblBacteria" id="AAK75775">
    <property type="protein sequence ID" value="AAK75775"/>
    <property type="gene ID" value="SP_1697"/>
</dbReference>
<dbReference type="KEGG" id="spn:SP_1697"/>
<dbReference type="eggNOG" id="COG1200">
    <property type="taxonomic scope" value="Bacteria"/>
</dbReference>
<dbReference type="PhylomeDB" id="Q54900"/>
<dbReference type="BioCyc" id="SPNE170187:G1FZB-1720-MONOMER"/>
<dbReference type="Proteomes" id="UP000000585">
    <property type="component" value="Chromosome"/>
</dbReference>
<dbReference type="GO" id="GO:0005524">
    <property type="term" value="F:ATP binding"/>
    <property type="evidence" value="ECO:0007669"/>
    <property type="project" value="UniProtKB-KW"/>
</dbReference>
<dbReference type="GO" id="GO:0016887">
    <property type="term" value="F:ATP hydrolysis activity"/>
    <property type="evidence" value="ECO:0007669"/>
    <property type="project" value="RHEA"/>
</dbReference>
<dbReference type="GO" id="GO:0003677">
    <property type="term" value="F:DNA binding"/>
    <property type="evidence" value="ECO:0007669"/>
    <property type="project" value="UniProtKB-KW"/>
</dbReference>
<dbReference type="GO" id="GO:0003678">
    <property type="term" value="F:DNA helicase activity"/>
    <property type="evidence" value="ECO:0007669"/>
    <property type="project" value="InterPro"/>
</dbReference>
<dbReference type="GO" id="GO:0006310">
    <property type="term" value="P:DNA recombination"/>
    <property type="evidence" value="ECO:0007669"/>
    <property type="project" value="UniProtKB-KW"/>
</dbReference>
<dbReference type="GO" id="GO:0006281">
    <property type="term" value="P:DNA repair"/>
    <property type="evidence" value="ECO:0007669"/>
    <property type="project" value="UniProtKB-KW"/>
</dbReference>
<dbReference type="CDD" id="cd17992">
    <property type="entry name" value="DEXHc_RecG"/>
    <property type="match status" value="1"/>
</dbReference>
<dbReference type="CDD" id="cd04488">
    <property type="entry name" value="RecG_wedge_OBF"/>
    <property type="match status" value="1"/>
</dbReference>
<dbReference type="CDD" id="cd18811">
    <property type="entry name" value="SF2_C_RecG"/>
    <property type="match status" value="1"/>
</dbReference>
<dbReference type="Gene3D" id="2.40.50.140">
    <property type="entry name" value="Nucleic acid-binding proteins"/>
    <property type="match status" value="1"/>
</dbReference>
<dbReference type="Gene3D" id="3.40.50.300">
    <property type="entry name" value="P-loop containing nucleotide triphosphate hydrolases"/>
    <property type="match status" value="2"/>
</dbReference>
<dbReference type="InterPro" id="IPR004609">
    <property type="entry name" value="ATP-dep_DNA_helicase_RecG"/>
</dbReference>
<dbReference type="InterPro" id="IPR011545">
    <property type="entry name" value="DEAD/DEAH_box_helicase_dom"/>
</dbReference>
<dbReference type="InterPro" id="IPR014001">
    <property type="entry name" value="Helicase_ATP-bd"/>
</dbReference>
<dbReference type="InterPro" id="IPR001650">
    <property type="entry name" value="Helicase_C-like"/>
</dbReference>
<dbReference type="InterPro" id="IPR012340">
    <property type="entry name" value="NA-bd_OB-fold"/>
</dbReference>
<dbReference type="InterPro" id="IPR027417">
    <property type="entry name" value="P-loop_NTPase"/>
</dbReference>
<dbReference type="InterPro" id="IPR047112">
    <property type="entry name" value="RecG/Mfd"/>
</dbReference>
<dbReference type="InterPro" id="IPR045562">
    <property type="entry name" value="RecG_dom3_C"/>
</dbReference>
<dbReference type="InterPro" id="IPR033454">
    <property type="entry name" value="RecG_wedge"/>
</dbReference>
<dbReference type="NCBIfam" id="NF008165">
    <property type="entry name" value="PRK10917.1-3"/>
    <property type="match status" value="1"/>
</dbReference>
<dbReference type="NCBIfam" id="NF008168">
    <property type="entry name" value="PRK10917.2-2"/>
    <property type="match status" value="1"/>
</dbReference>
<dbReference type="NCBIfam" id="TIGR00643">
    <property type="entry name" value="recG"/>
    <property type="match status" value="1"/>
</dbReference>
<dbReference type="PANTHER" id="PTHR47964">
    <property type="entry name" value="ATP-DEPENDENT DNA HELICASE HOMOLOG RECG, CHLOROPLASTIC"/>
    <property type="match status" value="1"/>
</dbReference>
<dbReference type="PANTHER" id="PTHR47964:SF1">
    <property type="entry name" value="ATP-DEPENDENT DNA HELICASE HOMOLOG RECG, CHLOROPLASTIC"/>
    <property type="match status" value="1"/>
</dbReference>
<dbReference type="Pfam" id="PF00270">
    <property type="entry name" value="DEAD"/>
    <property type="match status" value="1"/>
</dbReference>
<dbReference type="Pfam" id="PF00271">
    <property type="entry name" value="Helicase_C"/>
    <property type="match status" value="1"/>
</dbReference>
<dbReference type="Pfam" id="PF19833">
    <property type="entry name" value="RecG_dom3_C"/>
    <property type="match status" value="1"/>
</dbReference>
<dbReference type="Pfam" id="PF17191">
    <property type="entry name" value="RecG_wedge"/>
    <property type="match status" value="1"/>
</dbReference>
<dbReference type="SMART" id="SM00487">
    <property type="entry name" value="DEXDc"/>
    <property type="match status" value="1"/>
</dbReference>
<dbReference type="SMART" id="SM00490">
    <property type="entry name" value="HELICc"/>
    <property type="match status" value="1"/>
</dbReference>
<dbReference type="SUPFAM" id="SSF50249">
    <property type="entry name" value="Nucleic acid-binding proteins"/>
    <property type="match status" value="1"/>
</dbReference>
<dbReference type="SUPFAM" id="SSF52540">
    <property type="entry name" value="P-loop containing nucleoside triphosphate hydrolases"/>
    <property type="match status" value="2"/>
</dbReference>
<dbReference type="PROSITE" id="PS51192">
    <property type="entry name" value="HELICASE_ATP_BIND_1"/>
    <property type="match status" value="1"/>
</dbReference>
<dbReference type="PROSITE" id="PS51194">
    <property type="entry name" value="HELICASE_CTER"/>
    <property type="match status" value="1"/>
</dbReference>
<organism>
    <name type="scientific">Streptococcus pneumoniae serotype 4 (strain ATCC BAA-334 / TIGR4)</name>
    <dbReference type="NCBI Taxonomy" id="170187"/>
    <lineage>
        <taxon>Bacteria</taxon>
        <taxon>Bacillati</taxon>
        <taxon>Bacillota</taxon>
        <taxon>Bacilli</taxon>
        <taxon>Lactobacillales</taxon>
        <taxon>Streptococcaceae</taxon>
        <taxon>Streptococcus</taxon>
    </lineage>
</organism>
<comment type="function">
    <text evidence="1 6 7">Binds and unwinds Holliday junction (HJ) and partial replication fork DNA (PubMed:15533834). Unwinds R-loops (PubMed:15533834). Plays a critical role in recombination and DNA repair. Helps process Holliday junction intermediates to mature products by catalyzing branch migration. Has replication fork regression activity, unwinds stalled or blocked replication forks to make a HJ that can be resolved. Has a DNA unwinding activity characteristic of a DNA helicase with 3'-5' polarity (By similarity). Complements a recG deletion mutation in E.coli, restoring UV resistance and poor growth in the presence of mitomycin C (PubMed:8830261).</text>
</comment>
<comment type="catalytic activity">
    <reaction evidence="2">
        <text>Couples ATP hydrolysis with the unwinding of duplex DNA by translocating in the 3'-5' direction.</text>
        <dbReference type="EC" id="5.6.2.4"/>
    </reaction>
</comment>
<comment type="catalytic activity">
    <reaction evidence="2">
        <text>ATP + H2O = ADP + phosphate + H(+)</text>
        <dbReference type="Rhea" id="RHEA:13065"/>
        <dbReference type="ChEBI" id="CHEBI:15377"/>
        <dbReference type="ChEBI" id="CHEBI:15378"/>
        <dbReference type="ChEBI" id="CHEBI:30616"/>
        <dbReference type="ChEBI" id="CHEBI:43474"/>
        <dbReference type="ChEBI" id="CHEBI:456216"/>
        <dbReference type="EC" id="5.6.2.4"/>
    </reaction>
</comment>
<comment type="subunit">
    <text evidence="3">Monomer (By similarity).</text>
</comment>
<comment type="domain">
    <text evidence="3">The wedge domain within the N-terminus inserts into the replication fork junction, where the lagging and leading strand split (By similarity).</text>
</comment>
<comment type="disruption phenotype">
    <text evidence="7">Increased sensitivity to UV light and MMS (methyl methane sulphonate), a six- to seven-fold reduction in DNA recombination during transformation (PubMed:8830261).</text>
</comment>
<comment type="similarity">
    <text evidence="10">Belongs to the helicase family. RecG subfamily.</text>
</comment>
<name>RECG_STRPN</name>
<reference key="1">
    <citation type="journal article" date="1996" name="Mol. Microbiol.">
        <title>The mmsA locus of Streptococcus pneumoniae encodes a RecG-like protein involved in DNA repair and in three-strand recombination.</title>
        <authorList>
            <person name="Martin B."/>
            <person name="Sharples G.J."/>
            <person name="Humbert O."/>
            <person name="Lloyd R.G."/>
            <person name="Claverys J.-P."/>
        </authorList>
    </citation>
    <scope>NUCLEOTIDE SEQUENCE [GENOMIC DNA]</scope>
    <scope>FUNCTION</scope>
    <scope>DISRUPTION PHENOTYPE</scope>
    <source>
        <strain>R36A / Cl3</strain>
    </source>
</reference>
<reference key="2">
    <citation type="journal article" date="2001" name="Science">
        <title>Complete genome sequence of a virulent isolate of Streptococcus pneumoniae.</title>
        <authorList>
            <person name="Tettelin H."/>
            <person name="Nelson K.E."/>
            <person name="Paulsen I.T."/>
            <person name="Eisen J.A."/>
            <person name="Read T.D."/>
            <person name="Peterson S.N."/>
            <person name="Heidelberg J.F."/>
            <person name="DeBoy R.T."/>
            <person name="Haft D.H."/>
            <person name="Dodson R.J."/>
            <person name="Durkin A.S."/>
            <person name="Gwinn M.L."/>
            <person name="Kolonay J.F."/>
            <person name="Nelson W.C."/>
            <person name="Peterson J.D."/>
            <person name="Umayam L.A."/>
            <person name="White O."/>
            <person name="Salzberg S.L."/>
            <person name="Lewis M.R."/>
            <person name="Radune D."/>
            <person name="Holtzapple E.K."/>
            <person name="Khouri H.M."/>
            <person name="Wolf A.M."/>
            <person name="Utterback T.R."/>
            <person name="Hansen C.L."/>
            <person name="McDonald L.A."/>
            <person name="Feldblyum T.V."/>
            <person name="Angiuoli S.V."/>
            <person name="Dickinson T."/>
            <person name="Hickey E.K."/>
            <person name="Holt I.E."/>
            <person name="Loftus B.J."/>
            <person name="Yang F."/>
            <person name="Smith H.O."/>
            <person name="Venter J.C."/>
            <person name="Dougherty B.A."/>
            <person name="Morrison D.A."/>
            <person name="Hollingshead S.K."/>
            <person name="Fraser C.M."/>
        </authorList>
    </citation>
    <scope>NUCLEOTIDE SEQUENCE [LARGE SCALE GENOMIC DNA]</scope>
    <source>
        <strain>ATCC BAA-334 / TIGR4</strain>
    </source>
</reference>
<reference key="3">
    <citation type="journal article" date="2005" name="DNA Repair">
        <title>Conservation of RecG activity from pathogens to hyperthermophiles.</title>
        <authorList>
            <person name="Wen Q."/>
            <person name="Mahdi A.A."/>
            <person name="Briggs G.S."/>
            <person name="Sharples G.J."/>
            <person name="Lloyd R.G."/>
        </authorList>
    </citation>
    <scope>FUNCTION</scope>
    <scope>DNA-BINDING</scope>
    <source>
        <strain>R36A / Cl3</strain>
    </source>
</reference>
<feature type="chain" id="PRO_0000102158" description="ATP-dependent DNA helicase RecG">
    <location>
        <begin position="1"/>
        <end position="671"/>
    </location>
</feature>
<feature type="domain" description="Helicase ATP-binding" evidence="4">
    <location>
        <begin position="267"/>
        <end position="426"/>
    </location>
</feature>
<feature type="domain" description="Helicase C-terminal" evidence="5">
    <location>
        <begin position="445"/>
        <end position="610"/>
    </location>
</feature>
<feature type="region of interest" description="Wedge domain" evidence="3">
    <location>
        <begin position="44"/>
        <end position="134"/>
    </location>
</feature>
<feature type="short sequence motif" description="DEAH box" evidence="4">
    <location>
        <begin position="379"/>
        <end position="382"/>
    </location>
</feature>
<feature type="binding site" evidence="4">
    <location>
        <begin position="280"/>
        <end position="287"/>
    </location>
    <ligand>
        <name>ATP</name>
        <dbReference type="ChEBI" id="CHEBI:30616"/>
    </ligand>
</feature>
<feature type="sequence conflict" description="In Ref. 1; CAA90280." evidence="10" ref="1">
    <original>Y</original>
    <variation>D</variation>
    <location>
        <position position="196"/>
    </location>
</feature>
<feature type="sequence conflict" description="In Ref. 1; CAA90280." evidence="10" ref="1">
    <original>E</original>
    <variation>A</variation>
    <location>
        <position position="210"/>
    </location>
</feature>
<feature type="sequence conflict" description="In Ref. 1; CAA90280." evidence="10" ref="1">
    <original>M</original>
    <variation>T</variation>
    <location>
        <position position="221"/>
    </location>
</feature>
<feature type="sequence conflict" description="In Ref. 1; CAA90280." evidence="10" ref="1">
    <original>V</original>
    <variation>A</variation>
    <location>
        <position position="247"/>
    </location>
</feature>
<feature type="sequence conflict" description="In Ref. 1; CAA90280." evidence="10" ref="1">
    <original>V</original>
    <variation>A</variation>
    <location>
        <position position="463"/>
    </location>
</feature>
<evidence type="ECO:0000250" key="1"/>
<evidence type="ECO:0000250" key="2">
    <source>
        <dbReference type="UniProtKB" id="P24230"/>
    </source>
</evidence>
<evidence type="ECO:0000250" key="3">
    <source>
        <dbReference type="UniProtKB" id="Q9WY48"/>
    </source>
</evidence>
<evidence type="ECO:0000255" key="4">
    <source>
        <dbReference type="PROSITE-ProRule" id="PRU00541"/>
    </source>
</evidence>
<evidence type="ECO:0000255" key="5">
    <source>
        <dbReference type="PROSITE-ProRule" id="PRU00542"/>
    </source>
</evidence>
<evidence type="ECO:0000269" key="6">
    <source>
    </source>
</evidence>
<evidence type="ECO:0000269" key="7">
    <source>
    </source>
</evidence>
<evidence type="ECO:0000303" key="8">
    <source>
    </source>
</evidence>
<evidence type="ECO:0000303" key="9">
    <source>
    </source>
</evidence>
<evidence type="ECO:0000305" key="10"/>
<proteinExistence type="evidence at protein level"/>
<protein>
    <recommendedName>
        <fullName>ATP-dependent DNA helicase RecG</fullName>
        <ecNumber evidence="2">5.6.2.4</ecNumber>
    </recommendedName>
    <alternativeName>
        <fullName evidence="8">DNA branch migration protein RecG</fullName>
    </alternativeName>
    <alternativeName>
        <fullName>Probable DNA 3'-5' helicase RecG</fullName>
    </alternativeName>
</protein>